<sequence length="198" mass="20895">MESNKMVVGVLLIAAFALPALALFERDVITHETIEAVLKKSTPNSNTMLQEDAINALTGKTLISQTILEETLLKNGVVGGSIPCGESCVYIPCISSLLGCSCKSKVCYKNSLALPTLEKDVITPEALEAVLKSNGGAIVNTKTIISNAIFEETLLNNANHVLGGIPCAESCVYIPCLTSAIGCSCKSKVCYRNSLALN</sequence>
<evidence type="ECO:0000255" key="1"/>
<evidence type="ECO:0000255" key="2">
    <source>
        <dbReference type="PROSITE-ProRule" id="PRU00395"/>
    </source>
</evidence>
<evidence type="ECO:0000269" key="3">
    <source>
    </source>
</evidence>
<evidence type="ECO:0000303" key="4">
    <source>
    </source>
</evidence>
<evidence type="ECO:0000305" key="5"/>
<name>CYM45_MELRA</name>
<reference evidence="5" key="1">
    <citation type="journal article" date="2009" name="Org. Biomol. Chem.">
        <title>Circular proteins from Melicytus (Violaceae) refine the conserved protein and gene architecture of cyclotides.</title>
        <authorList>
            <person name="Trabi M."/>
            <person name="Mylne J.S."/>
            <person name="Sando L."/>
            <person name="Craik D.J."/>
        </authorList>
    </citation>
    <scope>NUCLEOTIDE SEQUENCE [MRNA]</scope>
    <scope>PROTEIN SEQUENCE OF 80-110 AND 164-193</scope>
    <scope>MASS SPECTROMETRY</scope>
    <scope>PRESENCE OF DISULFIDE BONDS</scope>
    <source>
        <tissue evidence="4">Leaf</tissue>
    </source>
</reference>
<accession>A9P3S1</accession>
<comment type="function">
    <text evidence="1 2">Probably participates in a plant defense mechanism.</text>
</comment>
<comment type="domain">
    <text evidence="5">The presence of a 'disulfide through disulfide knot' structurally defines this protein as a knottin.</text>
</comment>
<comment type="PTM">
    <text evidence="3">These are cyclic peptides.</text>
</comment>
<comment type="PTM">
    <text evidence="3">The mature peptides contain 3 disulfide bonds each.</text>
</comment>
<comment type="mass spectrometry" mass="3219.0" method="Electrospray" evidence="3">
    <molecule>Cyclotide mra4</molecule>
    <text>Cyclotide mra4.</text>
</comment>
<comment type="similarity">
    <text evidence="2">Belongs to the cyclotide family. Bracelet subfamily.</text>
</comment>
<organism evidence="4">
    <name type="scientific">Melicytus ramiflorus</name>
    <name type="common">Whitey wood</name>
    <dbReference type="NCBI Taxonomy" id="316498"/>
    <lineage>
        <taxon>Eukaryota</taxon>
        <taxon>Viridiplantae</taxon>
        <taxon>Streptophyta</taxon>
        <taxon>Embryophyta</taxon>
        <taxon>Tracheophyta</taxon>
        <taxon>Spermatophyta</taxon>
        <taxon>Magnoliopsida</taxon>
        <taxon>eudicotyledons</taxon>
        <taxon>Gunneridae</taxon>
        <taxon>Pentapetalae</taxon>
        <taxon>rosids</taxon>
        <taxon>fabids</taxon>
        <taxon>Malpighiales</taxon>
        <taxon>Violaceae</taxon>
        <taxon>Melicytus</taxon>
    </lineage>
</organism>
<dbReference type="EMBL" id="EF103478">
    <property type="protein sequence ID" value="ABO21629.1"/>
    <property type="molecule type" value="mRNA"/>
</dbReference>
<dbReference type="SMR" id="A9P3S1"/>
<dbReference type="GO" id="GO:0006952">
    <property type="term" value="P:defense response"/>
    <property type="evidence" value="ECO:0007669"/>
    <property type="project" value="UniProtKB-KW"/>
</dbReference>
<dbReference type="InterPro" id="IPR005535">
    <property type="entry name" value="Cyclotide"/>
</dbReference>
<dbReference type="InterPro" id="IPR012323">
    <property type="entry name" value="Cyclotide_bracelet_CS"/>
</dbReference>
<dbReference type="InterPro" id="IPR036146">
    <property type="entry name" value="Cyclotide_sf"/>
</dbReference>
<dbReference type="Pfam" id="PF03784">
    <property type="entry name" value="Cyclotide"/>
    <property type="match status" value="2"/>
</dbReference>
<dbReference type="SUPFAM" id="SSF57038">
    <property type="entry name" value="Cyclotides"/>
    <property type="match status" value="2"/>
</dbReference>
<dbReference type="PROSITE" id="PS51052">
    <property type="entry name" value="CYCLOTIDE"/>
    <property type="match status" value="2"/>
</dbReference>
<dbReference type="PROSITE" id="PS60008">
    <property type="entry name" value="CYCLOTIDE_BRACELET"/>
    <property type="match status" value="2"/>
</dbReference>
<proteinExistence type="evidence at protein level"/>
<protein>
    <recommendedName>
        <fullName evidence="5">Cyclotides mra4/mra5</fullName>
    </recommendedName>
    <component>
        <recommendedName>
            <fullName evidence="4">Cyclotide mra4</fullName>
        </recommendedName>
    </component>
    <component>
        <recommendedName>
            <fullName evidence="4">Cyclotide mra5</fullName>
        </recommendedName>
    </component>
</protein>
<feature type="signal peptide" evidence="1">
    <location>
        <begin position="1"/>
        <end position="22"/>
    </location>
</feature>
<feature type="propeptide" id="PRO_0000441833" evidence="5">
    <location>
        <begin position="23"/>
        <end position="79"/>
    </location>
</feature>
<feature type="peptide" id="PRO_0000441834" description="Cyclotide mra4" evidence="2 3">
    <location>
        <begin position="80"/>
        <end position="110"/>
    </location>
</feature>
<feature type="propeptide" id="PRO_0000441835" evidence="5">
    <location>
        <begin position="111"/>
        <end position="163"/>
    </location>
</feature>
<feature type="peptide" id="PRO_0000441836" description="Cyclotide mra5" evidence="2 3">
    <location>
        <begin position="164"/>
        <end position="193"/>
    </location>
</feature>
<feature type="propeptide" id="PRO_0000441837" evidence="5">
    <location>
        <begin position="194"/>
        <end position="198"/>
    </location>
</feature>
<feature type="disulfide bond" evidence="2">
    <location>
        <begin position="84"/>
        <end position="100"/>
    </location>
</feature>
<feature type="disulfide bond" evidence="2">
    <location>
        <begin position="88"/>
        <end position="102"/>
    </location>
</feature>
<feature type="disulfide bond" evidence="2">
    <location>
        <begin position="93"/>
        <end position="107"/>
    </location>
</feature>
<feature type="disulfide bond" evidence="2">
    <location>
        <begin position="167"/>
        <end position="183"/>
    </location>
</feature>
<feature type="disulfide bond" evidence="2">
    <location>
        <begin position="171"/>
        <end position="185"/>
    </location>
</feature>
<feature type="disulfide bond" evidence="2">
    <location>
        <begin position="176"/>
        <end position="190"/>
    </location>
</feature>
<keyword id="KW-0903">Direct protein sequencing</keyword>
<keyword id="KW-1015">Disulfide bond</keyword>
<keyword id="KW-0960">Knottin</keyword>
<keyword id="KW-0611">Plant defense</keyword>
<keyword id="KW-0732">Signal</keyword>